<gene>
    <name type="ordered locus">SA1388</name>
</gene>
<dbReference type="EMBL" id="BA000018">
    <property type="protein sequence ID" value="BAB42651.1"/>
    <property type="molecule type" value="Genomic_DNA"/>
</dbReference>
<dbReference type="PIR" id="F89936">
    <property type="entry name" value="F89936"/>
</dbReference>
<dbReference type="RefSeq" id="WP_000683940.1">
    <property type="nucleotide sequence ID" value="NC_002745.2"/>
</dbReference>
<dbReference type="SMR" id="P67273"/>
<dbReference type="EnsemblBacteria" id="BAB42651">
    <property type="protein sequence ID" value="BAB42651"/>
    <property type="gene ID" value="BAB42651"/>
</dbReference>
<dbReference type="KEGG" id="sau:SA1388"/>
<dbReference type="HOGENOM" id="CLU_037423_1_0_9"/>
<dbReference type="EvolutionaryTrace" id="P67273"/>
<dbReference type="GO" id="GO:0005737">
    <property type="term" value="C:cytoplasm"/>
    <property type="evidence" value="ECO:0007669"/>
    <property type="project" value="TreeGrafter"/>
</dbReference>
<dbReference type="GO" id="GO:0046872">
    <property type="term" value="F:metal ion binding"/>
    <property type="evidence" value="ECO:0007669"/>
    <property type="project" value="UniProtKB-KW"/>
</dbReference>
<dbReference type="FunFam" id="3.40.1390.30:FF:000001">
    <property type="entry name" value="GTP cyclohydrolase 1 type 2"/>
    <property type="match status" value="1"/>
</dbReference>
<dbReference type="FunFam" id="3.30.70.120:FF:000006">
    <property type="entry name" value="GTP cyclohydrolase 1 type 2 homolog"/>
    <property type="match status" value="1"/>
</dbReference>
<dbReference type="Gene3D" id="3.30.70.120">
    <property type="match status" value="1"/>
</dbReference>
<dbReference type="Gene3D" id="3.40.1390.30">
    <property type="entry name" value="NIF3 (NGG1p interacting factor 3)-like"/>
    <property type="match status" value="1"/>
</dbReference>
<dbReference type="InterPro" id="IPR002678">
    <property type="entry name" value="DUF34/NIF3"/>
</dbReference>
<dbReference type="InterPro" id="IPR017221">
    <property type="entry name" value="DUF34/NIF3_bac"/>
</dbReference>
<dbReference type="InterPro" id="IPR036069">
    <property type="entry name" value="DUF34/NIF3_sf"/>
</dbReference>
<dbReference type="InterPro" id="IPR015867">
    <property type="entry name" value="N-reg_PII/ATP_PRibTrfase_C"/>
</dbReference>
<dbReference type="NCBIfam" id="TIGR00486">
    <property type="entry name" value="YbgI_SA1388"/>
    <property type="match status" value="1"/>
</dbReference>
<dbReference type="PANTHER" id="PTHR13799:SF14">
    <property type="entry name" value="GTP CYCLOHYDROLASE 1 TYPE 2 HOMOLOG"/>
    <property type="match status" value="1"/>
</dbReference>
<dbReference type="PANTHER" id="PTHR13799">
    <property type="entry name" value="NGG1 INTERACTING FACTOR 3"/>
    <property type="match status" value="1"/>
</dbReference>
<dbReference type="Pfam" id="PF01784">
    <property type="entry name" value="DUF34_NIF3"/>
    <property type="match status" value="1"/>
</dbReference>
<dbReference type="PIRSF" id="PIRSF037489">
    <property type="entry name" value="UCP037489_NIF3_YqfO"/>
    <property type="match status" value="1"/>
</dbReference>
<dbReference type="SUPFAM" id="SSF102705">
    <property type="entry name" value="NIF3 (NGG1p interacting factor 3)-like"/>
    <property type="match status" value="1"/>
</dbReference>
<comment type="subunit">
    <text evidence="1">Toroid-shaped homohexamer that has a central cavity of about 38 Angstroms diameter.</text>
</comment>
<comment type="domain">
    <text evidence="1">Is organized into three distinct structural domains with interconnecting topological connectivities. The two NIF3 domains at the N- and C-terminus of the protein have the same overall fold as canonical NIF3-like proteins. The middle region of the polypeptide (residues 126-236) bulges out between the two NIF3 domains and is structured as a classical PII-like fold. The two entries to the central hollow space are capped by the two PII-like domain trimers. The trimeric PII domain may play a ligand induced signaling role and probably regulates the function of the NIF3-like domains.</text>
</comment>
<comment type="similarity">
    <text evidence="2">Belongs to the GTP cyclohydrolase I type 2/NIF3 family.</text>
</comment>
<reference key="1">
    <citation type="journal article" date="2001" name="Lancet">
        <title>Whole genome sequencing of meticillin-resistant Staphylococcus aureus.</title>
        <authorList>
            <person name="Kuroda M."/>
            <person name="Ohta T."/>
            <person name="Uchiyama I."/>
            <person name="Baba T."/>
            <person name="Yuzawa H."/>
            <person name="Kobayashi I."/>
            <person name="Cui L."/>
            <person name="Oguchi A."/>
            <person name="Aoki K."/>
            <person name="Nagai Y."/>
            <person name="Lian J.-Q."/>
            <person name="Ito T."/>
            <person name="Kanamori M."/>
            <person name="Matsumaru H."/>
            <person name="Maruyama A."/>
            <person name="Murakami H."/>
            <person name="Hosoyama A."/>
            <person name="Mizutani-Ui Y."/>
            <person name="Takahashi N.K."/>
            <person name="Sawano T."/>
            <person name="Inoue R."/>
            <person name="Kaito C."/>
            <person name="Sekimizu K."/>
            <person name="Hirakawa H."/>
            <person name="Kuhara S."/>
            <person name="Goto S."/>
            <person name="Yabuzaki J."/>
            <person name="Kanehisa M."/>
            <person name="Yamashita A."/>
            <person name="Oshima K."/>
            <person name="Furuya K."/>
            <person name="Yoshino C."/>
            <person name="Shiba T."/>
            <person name="Hattori M."/>
            <person name="Ogasawara N."/>
            <person name="Hayashi H."/>
            <person name="Hiramatsu K."/>
        </authorList>
    </citation>
    <scope>NUCLEOTIDE SEQUENCE [LARGE SCALE GENOMIC DNA]</scope>
    <source>
        <strain>N315</strain>
    </source>
</reference>
<feature type="chain" id="PRO_0000147329" description="GTP cyclohydrolase 1 type 2 homolog">
    <location>
        <begin position="1"/>
        <end position="366"/>
    </location>
</feature>
<feature type="binding site" evidence="1">
    <location>
        <position position="64"/>
    </location>
    <ligand>
        <name>Zn(2+)</name>
        <dbReference type="ChEBI" id="CHEBI:29105"/>
        <label>1</label>
    </ligand>
</feature>
<feature type="binding site" evidence="1">
    <location>
        <position position="65"/>
    </location>
    <ligand>
        <name>Zn(2+)</name>
        <dbReference type="ChEBI" id="CHEBI:29105"/>
        <label>2</label>
    </ligand>
</feature>
<feature type="binding site" evidence="1">
    <location>
        <position position="102"/>
    </location>
    <ligand>
        <name>Zn(2+)</name>
        <dbReference type="ChEBI" id="CHEBI:29105"/>
        <label>1</label>
    </ligand>
</feature>
<feature type="binding site" evidence="1">
    <location>
        <position position="326"/>
    </location>
    <ligand>
        <name>Zn(2+)</name>
        <dbReference type="ChEBI" id="CHEBI:29105"/>
        <label>2</label>
    </ligand>
</feature>
<feature type="binding site" evidence="1">
    <location>
        <position position="329"/>
    </location>
    <ligand>
        <name>Zn(2+)</name>
        <dbReference type="ChEBI" id="CHEBI:29105"/>
        <label>1</label>
    </ligand>
</feature>
<feature type="binding site" evidence="1">
    <location>
        <position position="329"/>
    </location>
    <ligand>
        <name>Zn(2+)</name>
        <dbReference type="ChEBI" id="CHEBI:29105"/>
        <label>2</label>
    </ligand>
</feature>
<sequence length="366" mass="41075">MKIADLMTLLDHHVPFSTAESWDNVGLLIGDGDVEVTGVLTALDCTLEVVNEAIEKGYNTIISHHPLIFKGVTSLKANGYGLIIRKLIQHDINLIAMHTNLDVNPYGVNMMLAKAMGLKNISIINNQQDVYYKVQTYIPKDNVGPFKDKLSENGLAQEGNYEYCFFESEGRGQFKPVGEANPTIGQIDKIEDVDEVKIEFMIDAYQKSRAEQLIKQYHPYETPVFDFIEIKQTSLYGLGVMAEVDNQMTLEDFAADIKSKLNIPSVRFVGESNQKIKRIAIIGGSGIGYEYQAVQQGADVFVTGDIKHHDALDAKIHGVNLIDINHYSEYVMKEGLKTLLMNWFNIEKINIDVEASTINTDPFQYI</sequence>
<protein>
    <recommendedName>
        <fullName>GTP cyclohydrolase 1 type 2 homolog</fullName>
    </recommendedName>
</protein>
<name>GCH1L_STAAN</name>
<accession>P67273</accession>
<accession>Q99TT7</accession>
<organism>
    <name type="scientific">Staphylococcus aureus (strain N315)</name>
    <dbReference type="NCBI Taxonomy" id="158879"/>
    <lineage>
        <taxon>Bacteria</taxon>
        <taxon>Bacillati</taxon>
        <taxon>Bacillota</taxon>
        <taxon>Bacilli</taxon>
        <taxon>Bacillales</taxon>
        <taxon>Staphylococcaceae</taxon>
        <taxon>Staphylococcus</taxon>
    </lineage>
</organism>
<keyword id="KW-0479">Metal-binding</keyword>
<keyword id="KW-0862">Zinc</keyword>
<proteinExistence type="inferred from homology"/>
<evidence type="ECO:0000250" key="1">
    <source>
        <dbReference type="UniProtKB" id="P67272"/>
    </source>
</evidence>
<evidence type="ECO:0000305" key="2"/>